<dbReference type="EMBL" id="CP001120">
    <property type="protein sequence ID" value="ACF69932.1"/>
    <property type="molecule type" value="Genomic_DNA"/>
</dbReference>
<dbReference type="RefSeq" id="WP_000272193.1">
    <property type="nucleotide sequence ID" value="NC_011083.1"/>
</dbReference>
<dbReference type="SMR" id="B4TK39"/>
<dbReference type="KEGG" id="seh:SeHA_C0248"/>
<dbReference type="HOGENOM" id="CLU_136774_0_0_6"/>
<dbReference type="Proteomes" id="UP000001866">
    <property type="component" value="Chromosome"/>
</dbReference>
<dbReference type="HAMAP" id="MF_01519">
    <property type="entry name" value="UPF0325"/>
    <property type="match status" value="1"/>
</dbReference>
<dbReference type="InterPro" id="IPR020911">
    <property type="entry name" value="UPF0325"/>
</dbReference>
<dbReference type="NCBIfam" id="NF010213">
    <property type="entry name" value="PRK13677.1"/>
    <property type="match status" value="1"/>
</dbReference>
<dbReference type="Pfam" id="PF11944">
    <property type="entry name" value="DUF3461"/>
    <property type="match status" value="1"/>
</dbReference>
<name>YAEH_SALHS</name>
<feature type="chain" id="PRO_1000198439" description="UPF0325 protein YaeH">
    <location>
        <begin position="1"/>
        <end position="128"/>
    </location>
</feature>
<gene>
    <name evidence="1" type="primary">yaeH</name>
    <name type="ordered locus">SeHA_C0248</name>
</gene>
<proteinExistence type="inferred from homology"/>
<reference key="1">
    <citation type="journal article" date="2011" name="J. Bacteriol.">
        <title>Comparative genomics of 28 Salmonella enterica isolates: evidence for CRISPR-mediated adaptive sublineage evolution.</title>
        <authorList>
            <person name="Fricke W.F."/>
            <person name="Mammel M.K."/>
            <person name="McDermott P.F."/>
            <person name="Tartera C."/>
            <person name="White D.G."/>
            <person name="Leclerc J.E."/>
            <person name="Ravel J."/>
            <person name="Cebula T.A."/>
        </authorList>
    </citation>
    <scope>NUCLEOTIDE SEQUENCE [LARGE SCALE GENOMIC DNA]</scope>
    <source>
        <strain>SL476</strain>
    </source>
</reference>
<organism>
    <name type="scientific">Salmonella heidelberg (strain SL476)</name>
    <dbReference type="NCBI Taxonomy" id="454169"/>
    <lineage>
        <taxon>Bacteria</taxon>
        <taxon>Pseudomonadati</taxon>
        <taxon>Pseudomonadota</taxon>
        <taxon>Gammaproteobacteria</taxon>
        <taxon>Enterobacterales</taxon>
        <taxon>Enterobacteriaceae</taxon>
        <taxon>Salmonella</taxon>
    </lineage>
</organism>
<accession>B4TK39</accession>
<protein>
    <recommendedName>
        <fullName evidence="1">UPF0325 protein YaeH</fullName>
    </recommendedName>
</protein>
<comment type="similarity">
    <text evidence="1">Belongs to the UPF0325 family.</text>
</comment>
<sequence>MYDNLKSLGITNPEEIDRYSLRQEANNDILKIYFQKDRGEFFAKSVKFKYPRQRKTVVADGIGQGYKEVQEISPNLRYVIDELDQICQRDRSELDLKRKILDDLRHLESVVANKISEIEADLDKLTRK</sequence>
<evidence type="ECO:0000255" key="1">
    <source>
        <dbReference type="HAMAP-Rule" id="MF_01519"/>
    </source>
</evidence>